<reference key="1">
    <citation type="journal article" date="2001" name="Proc. Natl. Acad. Sci. U.S.A.">
        <title>Complete genome sequence of Caulobacter crescentus.</title>
        <authorList>
            <person name="Nierman W.C."/>
            <person name="Feldblyum T.V."/>
            <person name="Laub M.T."/>
            <person name="Paulsen I.T."/>
            <person name="Nelson K.E."/>
            <person name="Eisen J.A."/>
            <person name="Heidelberg J.F."/>
            <person name="Alley M.R.K."/>
            <person name="Ohta N."/>
            <person name="Maddock J.R."/>
            <person name="Potocka I."/>
            <person name="Nelson W.C."/>
            <person name="Newton A."/>
            <person name="Stephens C."/>
            <person name="Phadke N.D."/>
            <person name="Ely B."/>
            <person name="DeBoy R.T."/>
            <person name="Dodson R.J."/>
            <person name="Durkin A.S."/>
            <person name="Gwinn M.L."/>
            <person name="Haft D.H."/>
            <person name="Kolonay J.F."/>
            <person name="Smit J."/>
            <person name="Craven M.B."/>
            <person name="Khouri H.M."/>
            <person name="Shetty J."/>
            <person name="Berry K.J."/>
            <person name="Utterback T.R."/>
            <person name="Tran K."/>
            <person name="Wolf A.M."/>
            <person name="Vamathevan J.J."/>
            <person name="Ermolaeva M.D."/>
            <person name="White O."/>
            <person name="Salzberg S.L."/>
            <person name="Venter J.C."/>
            <person name="Shapiro L."/>
            <person name="Fraser C.M."/>
        </authorList>
    </citation>
    <scope>NUCLEOTIDE SEQUENCE [LARGE SCALE GENOMIC DNA]</scope>
    <source>
        <strain>ATCC 19089 / CIP 103742 / CB 15</strain>
    </source>
</reference>
<accession>Q9A7I8</accession>
<proteinExistence type="inferred from homology"/>
<name>LIPA_CAUVC</name>
<dbReference type="EC" id="2.8.1.8" evidence="1"/>
<dbReference type="EMBL" id="AE005673">
    <property type="protein sequence ID" value="AAK23711.1"/>
    <property type="molecule type" value="Genomic_DNA"/>
</dbReference>
<dbReference type="PIR" id="C87464">
    <property type="entry name" value="C87464"/>
</dbReference>
<dbReference type="RefSeq" id="NP_420543.1">
    <property type="nucleotide sequence ID" value="NC_002696.2"/>
</dbReference>
<dbReference type="RefSeq" id="WP_010919603.1">
    <property type="nucleotide sequence ID" value="NC_002696.2"/>
</dbReference>
<dbReference type="SMR" id="Q9A7I8"/>
<dbReference type="STRING" id="190650.CC_1735"/>
<dbReference type="EnsemblBacteria" id="AAK23711">
    <property type="protein sequence ID" value="AAK23711"/>
    <property type="gene ID" value="CC_1735"/>
</dbReference>
<dbReference type="KEGG" id="ccr:CC_1735"/>
<dbReference type="PATRIC" id="fig|190650.5.peg.1759"/>
<dbReference type="eggNOG" id="COG0320">
    <property type="taxonomic scope" value="Bacteria"/>
</dbReference>
<dbReference type="HOGENOM" id="CLU_033144_2_1_5"/>
<dbReference type="BioCyc" id="CAULO:CC1735-MONOMER"/>
<dbReference type="UniPathway" id="UPA00538">
    <property type="reaction ID" value="UER00593"/>
</dbReference>
<dbReference type="Proteomes" id="UP000001816">
    <property type="component" value="Chromosome"/>
</dbReference>
<dbReference type="GO" id="GO:0005737">
    <property type="term" value="C:cytoplasm"/>
    <property type="evidence" value="ECO:0007669"/>
    <property type="project" value="UniProtKB-SubCell"/>
</dbReference>
<dbReference type="GO" id="GO:0051539">
    <property type="term" value="F:4 iron, 4 sulfur cluster binding"/>
    <property type="evidence" value="ECO:0007669"/>
    <property type="project" value="UniProtKB-UniRule"/>
</dbReference>
<dbReference type="GO" id="GO:0016992">
    <property type="term" value="F:lipoate synthase activity"/>
    <property type="evidence" value="ECO:0007669"/>
    <property type="project" value="UniProtKB-UniRule"/>
</dbReference>
<dbReference type="GO" id="GO:0046872">
    <property type="term" value="F:metal ion binding"/>
    <property type="evidence" value="ECO:0007669"/>
    <property type="project" value="UniProtKB-KW"/>
</dbReference>
<dbReference type="CDD" id="cd01335">
    <property type="entry name" value="Radical_SAM"/>
    <property type="match status" value="1"/>
</dbReference>
<dbReference type="FunFam" id="3.20.20.70:FF:000040">
    <property type="entry name" value="Lipoyl synthase"/>
    <property type="match status" value="1"/>
</dbReference>
<dbReference type="Gene3D" id="3.20.20.70">
    <property type="entry name" value="Aldolase class I"/>
    <property type="match status" value="1"/>
</dbReference>
<dbReference type="HAMAP" id="MF_00206">
    <property type="entry name" value="Lipoyl_synth"/>
    <property type="match status" value="1"/>
</dbReference>
<dbReference type="InterPro" id="IPR013785">
    <property type="entry name" value="Aldolase_TIM"/>
</dbReference>
<dbReference type="InterPro" id="IPR006638">
    <property type="entry name" value="Elp3/MiaA/NifB-like_rSAM"/>
</dbReference>
<dbReference type="InterPro" id="IPR031691">
    <property type="entry name" value="LIAS_N"/>
</dbReference>
<dbReference type="InterPro" id="IPR003698">
    <property type="entry name" value="Lipoyl_synth"/>
</dbReference>
<dbReference type="InterPro" id="IPR007197">
    <property type="entry name" value="rSAM"/>
</dbReference>
<dbReference type="NCBIfam" id="TIGR00510">
    <property type="entry name" value="lipA"/>
    <property type="match status" value="1"/>
</dbReference>
<dbReference type="NCBIfam" id="NF004019">
    <property type="entry name" value="PRK05481.1"/>
    <property type="match status" value="1"/>
</dbReference>
<dbReference type="NCBIfam" id="NF009544">
    <property type="entry name" value="PRK12928.1"/>
    <property type="match status" value="1"/>
</dbReference>
<dbReference type="PANTHER" id="PTHR10949">
    <property type="entry name" value="LIPOYL SYNTHASE"/>
    <property type="match status" value="1"/>
</dbReference>
<dbReference type="PANTHER" id="PTHR10949:SF0">
    <property type="entry name" value="LIPOYL SYNTHASE, MITOCHONDRIAL"/>
    <property type="match status" value="1"/>
</dbReference>
<dbReference type="Pfam" id="PF16881">
    <property type="entry name" value="LIAS_N"/>
    <property type="match status" value="1"/>
</dbReference>
<dbReference type="Pfam" id="PF04055">
    <property type="entry name" value="Radical_SAM"/>
    <property type="match status" value="1"/>
</dbReference>
<dbReference type="PIRSF" id="PIRSF005963">
    <property type="entry name" value="Lipoyl_synth"/>
    <property type="match status" value="1"/>
</dbReference>
<dbReference type="SFLD" id="SFLDF00271">
    <property type="entry name" value="lipoyl_synthase"/>
    <property type="match status" value="1"/>
</dbReference>
<dbReference type="SFLD" id="SFLDG01058">
    <property type="entry name" value="lipoyl_synthase_like"/>
    <property type="match status" value="1"/>
</dbReference>
<dbReference type="SMART" id="SM00729">
    <property type="entry name" value="Elp3"/>
    <property type="match status" value="1"/>
</dbReference>
<dbReference type="SUPFAM" id="SSF102114">
    <property type="entry name" value="Radical SAM enzymes"/>
    <property type="match status" value="1"/>
</dbReference>
<dbReference type="PROSITE" id="PS51918">
    <property type="entry name" value="RADICAL_SAM"/>
    <property type="match status" value="1"/>
</dbReference>
<feature type="chain" id="PRO_0000102301" description="Lipoyl synthase">
    <location>
        <begin position="1"/>
        <end position="325"/>
    </location>
</feature>
<feature type="domain" description="Radical SAM core" evidence="2">
    <location>
        <begin position="76"/>
        <end position="292"/>
    </location>
</feature>
<feature type="region of interest" description="Disordered" evidence="3">
    <location>
        <begin position="1"/>
        <end position="33"/>
    </location>
</feature>
<feature type="compositionally biased region" description="Basic and acidic residues" evidence="3">
    <location>
        <begin position="8"/>
        <end position="33"/>
    </location>
</feature>
<feature type="binding site" evidence="1">
    <location>
        <position position="64"/>
    </location>
    <ligand>
        <name>[4Fe-4S] cluster</name>
        <dbReference type="ChEBI" id="CHEBI:49883"/>
        <label>1</label>
    </ligand>
</feature>
<feature type="binding site" evidence="1">
    <location>
        <position position="69"/>
    </location>
    <ligand>
        <name>[4Fe-4S] cluster</name>
        <dbReference type="ChEBI" id="CHEBI:49883"/>
        <label>1</label>
    </ligand>
</feature>
<feature type="binding site" evidence="1">
    <location>
        <position position="75"/>
    </location>
    <ligand>
        <name>[4Fe-4S] cluster</name>
        <dbReference type="ChEBI" id="CHEBI:49883"/>
        <label>1</label>
    </ligand>
</feature>
<feature type="binding site" evidence="1">
    <location>
        <position position="90"/>
    </location>
    <ligand>
        <name>[4Fe-4S] cluster</name>
        <dbReference type="ChEBI" id="CHEBI:49883"/>
        <label>2</label>
        <note>4Fe-4S-S-AdoMet</note>
    </ligand>
</feature>
<feature type="binding site" evidence="1">
    <location>
        <position position="94"/>
    </location>
    <ligand>
        <name>[4Fe-4S] cluster</name>
        <dbReference type="ChEBI" id="CHEBI:49883"/>
        <label>2</label>
        <note>4Fe-4S-S-AdoMet</note>
    </ligand>
</feature>
<feature type="binding site" evidence="1">
    <location>
        <position position="97"/>
    </location>
    <ligand>
        <name>[4Fe-4S] cluster</name>
        <dbReference type="ChEBI" id="CHEBI:49883"/>
        <label>2</label>
        <note>4Fe-4S-S-AdoMet</note>
    </ligand>
</feature>
<feature type="binding site" evidence="1">
    <location>
        <position position="303"/>
    </location>
    <ligand>
        <name>[4Fe-4S] cluster</name>
        <dbReference type="ChEBI" id="CHEBI:49883"/>
        <label>1</label>
    </ligand>
</feature>
<gene>
    <name evidence="1" type="primary">lipA</name>
    <name type="ordered locus">CC_1735</name>
</gene>
<organism>
    <name type="scientific">Caulobacter vibrioides (strain ATCC 19089 / CIP 103742 / CB 15)</name>
    <name type="common">Caulobacter crescentus</name>
    <dbReference type="NCBI Taxonomy" id="190650"/>
    <lineage>
        <taxon>Bacteria</taxon>
        <taxon>Pseudomonadati</taxon>
        <taxon>Pseudomonadota</taxon>
        <taxon>Alphaproteobacteria</taxon>
        <taxon>Caulobacterales</taxon>
        <taxon>Caulobacteraceae</taxon>
        <taxon>Caulobacter</taxon>
    </lineage>
</organism>
<evidence type="ECO:0000255" key="1">
    <source>
        <dbReference type="HAMAP-Rule" id="MF_00206"/>
    </source>
</evidence>
<evidence type="ECO:0000255" key="2">
    <source>
        <dbReference type="PROSITE-ProRule" id="PRU01266"/>
    </source>
</evidence>
<evidence type="ECO:0000256" key="3">
    <source>
        <dbReference type="SAM" id="MobiDB-lite"/>
    </source>
</evidence>
<sequence length="325" mass="36161">MATVIDTLKARGSEDRAARHPEKQNRPDTPVLRKPEWLRVRAPGSGQYNETKGIVREHKLHTVCEEAACPNIGECWSQKHATMMIMGEICTRACAFCNVTTGLPTQLDPDEPRRVAEAVAKMGLKHVVITSVDRDDLLDGGARHFAEVVTSIRAAAPGTTIEILTPDFLRKDGAENVVIDSKPDVFNHNLETVPRLYLKIRPGARYYNSLRLLDRVKQRDPSQFTKSGLMVGLGETKEEVMQVMDDMRSAGVDFITIGQYLQPTRKHAAIDRFVTPEEFKAYEAIARAKGFLMVSSSPLTRSSHHAGEDFAKLQAARRALDARTA</sequence>
<protein>
    <recommendedName>
        <fullName evidence="1">Lipoyl synthase</fullName>
        <ecNumber evidence="1">2.8.1.8</ecNumber>
    </recommendedName>
    <alternativeName>
        <fullName evidence="1">Lip-syn</fullName>
        <shortName evidence="1">LS</shortName>
    </alternativeName>
    <alternativeName>
        <fullName evidence="1">Lipoate synthase</fullName>
    </alternativeName>
    <alternativeName>
        <fullName evidence="1">Lipoic acid synthase</fullName>
    </alternativeName>
    <alternativeName>
        <fullName evidence="1">Sulfur insertion protein LipA</fullName>
    </alternativeName>
</protein>
<comment type="function">
    <text evidence="1">Catalyzes the radical-mediated insertion of two sulfur atoms into the C-6 and C-8 positions of the octanoyl moiety bound to the lipoyl domains of lipoate-dependent enzymes, thereby converting the octanoylated domains into lipoylated derivatives.</text>
</comment>
<comment type="catalytic activity">
    <reaction evidence="1">
        <text>[[Fe-S] cluster scaffold protein carrying a second [4Fe-4S](2+) cluster] + N(6)-octanoyl-L-lysyl-[protein] + 2 oxidized [2Fe-2S]-[ferredoxin] + 2 S-adenosyl-L-methionine + 4 H(+) = [[Fe-S] cluster scaffold protein] + N(6)-[(R)-dihydrolipoyl]-L-lysyl-[protein] + 4 Fe(3+) + 2 hydrogen sulfide + 2 5'-deoxyadenosine + 2 L-methionine + 2 reduced [2Fe-2S]-[ferredoxin]</text>
        <dbReference type="Rhea" id="RHEA:16585"/>
        <dbReference type="Rhea" id="RHEA-COMP:9928"/>
        <dbReference type="Rhea" id="RHEA-COMP:10000"/>
        <dbReference type="Rhea" id="RHEA-COMP:10001"/>
        <dbReference type="Rhea" id="RHEA-COMP:10475"/>
        <dbReference type="Rhea" id="RHEA-COMP:14568"/>
        <dbReference type="Rhea" id="RHEA-COMP:14569"/>
        <dbReference type="ChEBI" id="CHEBI:15378"/>
        <dbReference type="ChEBI" id="CHEBI:17319"/>
        <dbReference type="ChEBI" id="CHEBI:29034"/>
        <dbReference type="ChEBI" id="CHEBI:29919"/>
        <dbReference type="ChEBI" id="CHEBI:33722"/>
        <dbReference type="ChEBI" id="CHEBI:33737"/>
        <dbReference type="ChEBI" id="CHEBI:33738"/>
        <dbReference type="ChEBI" id="CHEBI:57844"/>
        <dbReference type="ChEBI" id="CHEBI:59789"/>
        <dbReference type="ChEBI" id="CHEBI:78809"/>
        <dbReference type="ChEBI" id="CHEBI:83100"/>
        <dbReference type="EC" id="2.8.1.8"/>
    </reaction>
</comment>
<comment type="cofactor">
    <cofactor evidence="1">
        <name>[4Fe-4S] cluster</name>
        <dbReference type="ChEBI" id="CHEBI:49883"/>
    </cofactor>
    <text evidence="1">Binds 2 [4Fe-4S] clusters per subunit. One cluster is coordinated with 3 cysteines and an exchangeable S-adenosyl-L-methionine.</text>
</comment>
<comment type="pathway">
    <text evidence="1">Protein modification; protein lipoylation via endogenous pathway; protein N(6)-(lipoyl)lysine from octanoyl-[acyl-carrier-protein]: step 2/2.</text>
</comment>
<comment type="subcellular location">
    <subcellularLocation>
        <location evidence="1">Cytoplasm</location>
    </subcellularLocation>
</comment>
<comment type="similarity">
    <text evidence="1">Belongs to the radical SAM superfamily. Lipoyl synthase family.</text>
</comment>
<keyword id="KW-0004">4Fe-4S</keyword>
<keyword id="KW-0963">Cytoplasm</keyword>
<keyword id="KW-0408">Iron</keyword>
<keyword id="KW-0411">Iron-sulfur</keyword>
<keyword id="KW-0479">Metal-binding</keyword>
<keyword id="KW-1185">Reference proteome</keyword>
<keyword id="KW-0949">S-adenosyl-L-methionine</keyword>
<keyword id="KW-0808">Transferase</keyword>